<sequence length="261" mass="29920">MLICNDKSNPKTLLEEIMALRPWRKGPFEISQIKIDSEWDSSIKWDLVKNATPLKDKVVADVGCNNGYYLFKMLEHGPKSLVGFDPGVLVKKQFEFLAPFFDKEKKIIYESLGVEDLHEKYPNAFDVIFCLGVLYHRKSPLEALKALYHALKIKGELVLDTLIIDSPLDIALCPKKTYAKMKNVYFIPSVSALKGWCERVGFENFEILSVLKTTPKEQRKTDFILGQSLEDFLDKTDPSKTLEGYDAPLRGYFKMLKPSKR</sequence>
<protein>
    <recommendedName>
        <fullName evidence="1">tRNA U34 carboxymethyltransferase</fullName>
        <ecNumber evidence="1">2.5.1.-</ecNumber>
    </recommendedName>
</protein>
<dbReference type="EC" id="2.5.1.-" evidence="1"/>
<dbReference type="EMBL" id="AE000511">
    <property type="protein sequence ID" value="AAD07484.1"/>
    <property type="molecule type" value="Genomic_DNA"/>
</dbReference>
<dbReference type="PIR" id="C64572">
    <property type="entry name" value="C64572"/>
</dbReference>
<dbReference type="RefSeq" id="NP_207217.1">
    <property type="nucleotide sequence ID" value="NC_000915.1"/>
</dbReference>
<dbReference type="RefSeq" id="WP_000903912.1">
    <property type="nucleotide sequence ID" value="NC_018939.1"/>
</dbReference>
<dbReference type="SMR" id="O25173"/>
<dbReference type="DIP" id="DIP-3114N"/>
<dbReference type="FunCoup" id="O25173">
    <property type="interactions" value="5"/>
</dbReference>
<dbReference type="IntAct" id="O25173">
    <property type="interactions" value="3"/>
</dbReference>
<dbReference type="MINT" id="O25173"/>
<dbReference type="STRING" id="85962.HP_0419"/>
<dbReference type="PaxDb" id="85962-C694_02135"/>
<dbReference type="EnsemblBacteria" id="AAD07484">
    <property type="protein sequence ID" value="AAD07484"/>
    <property type="gene ID" value="HP_0419"/>
</dbReference>
<dbReference type="KEGG" id="heo:C694_02135"/>
<dbReference type="KEGG" id="hpy:HP_0419"/>
<dbReference type="PATRIC" id="fig|85962.47.peg.444"/>
<dbReference type="eggNOG" id="COG0500">
    <property type="taxonomic scope" value="Bacteria"/>
</dbReference>
<dbReference type="InParanoid" id="O25173"/>
<dbReference type="OrthoDB" id="9765084at2"/>
<dbReference type="PhylomeDB" id="O25173"/>
<dbReference type="Proteomes" id="UP000000429">
    <property type="component" value="Chromosome"/>
</dbReference>
<dbReference type="GO" id="GO:0008168">
    <property type="term" value="F:methyltransferase activity"/>
    <property type="evidence" value="ECO:0000318"/>
    <property type="project" value="GO_Central"/>
</dbReference>
<dbReference type="GO" id="GO:0016765">
    <property type="term" value="F:transferase activity, transferring alkyl or aryl (other than methyl) groups"/>
    <property type="evidence" value="ECO:0007669"/>
    <property type="project" value="InterPro"/>
</dbReference>
<dbReference type="GO" id="GO:0002098">
    <property type="term" value="P:tRNA wobble uridine modification"/>
    <property type="evidence" value="ECO:0007669"/>
    <property type="project" value="InterPro"/>
</dbReference>
<dbReference type="CDD" id="cd02440">
    <property type="entry name" value="AdoMet_MTases"/>
    <property type="match status" value="1"/>
</dbReference>
<dbReference type="Gene3D" id="3.40.50.150">
    <property type="entry name" value="Vaccinia Virus protein VP39"/>
    <property type="match status" value="1"/>
</dbReference>
<dbReference type="HAMAP" id="MF_01590">
    <property type="entry name" value="tRNA_carboxymethyltr_CmoB"/>
    <property type="match status" value="1"/>
</dbReference>
<dbReference type="InterPro" id="IPR010017">
    <property type="entry name" value="CmoB"/>
</dbReference>
<dbReference type="InterPro" id="IPR027555">
    <property type="entry name" value="Mo5U34_MeTrfas-like"/>
</dbReference>
<dbReference type="InterPro" id="IPR029063">
    <property type="entry name" value="SAM-dependent_MTases_sf"/>
</dbReference>
<dbReference type="NCBIfam" id="NF011650">
    <property type="entry name" value="PRK15068.1"/>
    <property type="match status" value="1"/>
</dbReference>
<dbReference type="NCBIfam" id="TIGR00452">
    <property type="entry name" value="tRNA 5-methoxyuridine(34)/uridine 5-oxyacetic acid(34) synthase CmoB"/>
    <property type="match status" value="1"/>
</dbReference>
<dbReference type="Pfam" id="PF08003">
    <property type="entry name" value="Methyltransf_9"/>
    <property type="match status" value="1"/>
</dbReference>
<dbReference type="SUPFAM" id="SSF53335">
    <property type="entry name" value="S-adenosyl-L-methionine-dependent methyltransferases"/>
    <property type="match status" value="1"/>
</dbReference>
<proteinExistence type="inferred from homology"/>
<keyword id="KW-1185">Reference proteome</keyword>
<keyword id="KW-0808">Transferase</keyword>
<keyword id="KW-0819">tRNA processing</keyword>
<comment type="function">
    <text evidence="1">Catalyzes carboxymethyl transfer from carboxy-S-adenosyl-L-methionine (Cx-SAM) to 5-hydroxyuridine (ho5U) to form 5-carboxymethoxyuridine (cmo5U) at position 34 in tRNAs.</text>
</comment>
<comment type="catalytic activity">
    <reaction evidence="1">
        <text>carboxy-S-adenosyl-L-methionine + 5-hydroxyuridine(34) in tRNA = 5-carboxymethoxyuridine(34) in tRNA + S-adenosyl-L-homocysteine + H(+)</text>
        <dbReference type="Rhea" id="RHEA:52848"/>
        <dbReference type="Rhea" id="RHEA-COMP:13381"/>
        <dbReference type="Rhea" id="RHEA-COMP:13383"/>
        <dbReference type="ChEBI" id="CHEBI:15378"/>
        <dbReference type="ChEBI" id="CHEBI:57856"/>
        <dbReference type="ChEBI" id="CHEBI:134278"/>
        <dbReference type="ChEBI" id="CHEBI:136877"/>
        <dbReference type="ChEBI" id="CHEBI:136879"/>
    </reaction>
</comment>
<comment type="subunit">
    <text evidence="1">Homotetramer.</text>
</comment>
<comment type="similarity">
    <text evidence="1">Belongs to the class I-like SAM-binding methyltransferase superfamily. CmoB family.</text>
</comment>
<feature type="chain" id="PRO_0000313929" description="tRNA U34 carboxymethyltransferase">
    <location>
        <begin position="1"/>
        <end position="261"/>
    </location>
</feature>
<feature type="binding site" evidence="1">
    <location>
        <position position="25"/>
    </location>
    <ligand>
        <name>carboxy-S-adenosyl-L-methionine</name>
        <dbReference type="ChEBI" id="CHEBI:134278"/>
    </ligand>
</feature>
<feature type="binding site" evidence="1">
    <location>
        <position position="39"/>
    </location>
    <ligand>
        <name>carboxy-S-adenosyl-L-methionine</name>
        <dbReference type="ChEBI" id="CHEBI:134278"/>
    </ligand>
</feature>
<feature type="binding site" evidence="1">
    <location>
        <position position="44"/>
    </location>
    <ligand>
        <name>carboxy-S-adenosyl-L-methionine</name>
        <dbReference type="ChEBI" id="CHEBI:134278"/>
    </ligand>
</feature>
<feature type="binding site" evidence="1">
    <location>
        <position position="63"/>
    </location>
    <ligand>
        <name>carboxy-S-adenosyl-L-methionine</name>
        <dbReference type="ChEBI" id="CHEBI:134278"/>
    </ligand>
</feature>
<feature type="binding site" evidence="1">
    <location>
        <begin position="114"/>
        <end position="115"/>
    </location>
    <ligand>
        <name>carboxy-S-adenosyl-L-methionine</name>
        <dbReference type="ChEBI" id="CHEBI:134278"/>
    </ligand>
</feature>
<feature type="binding site" evidence="1">
    <location>
        <position position="135"/>
    </location>
    <ligand>
        <name>carboxy-S-adenosyl-L-methionine</name>
        <dbReference type="ChEBI" id="CHEBI:134278"/>
    </ligand>
</feature>
<feature type="binding site" evidence="1">
    <location>
        <position position="250"/>
    </location>
    <ligand>
        <name>carboxy-S-adenosyl-L-methionine</name>
        <dbReference type="ChEBI" id="CHEBI:134278"/>
    </ligand>
</feature>
<organism>
    <name type="scientific">Helicobacter pylori (strain ATCC 700392 / 26695)</name>
    <name type="common">Campylobacter pylori</name>
    <dbReference type="NCBI Taxonomy" id="85962"/>
    <lineage>
        <taxon>Bacteria</taxon>
        <taxon>Pseudomonadati</taxon>
        <taxon>Campylobacterota</taxon>
        <taxon>Epsilonproteobacteria</taxon>
        <taxon>Campylobacterales</taxon>
        <taxon>Helicobacteraceae</taxon>
        <taxon>Helicobacter</taxon>
    </lineage>
</organism>
<gene>
    <name evidence="1" type="primary">cmoB</name>
    <name type="ordered locus">HP_0419</name>
</gene>
<evidence type="ECO:0000255" key="1">
    <source>
        <dbReference type="HAMAP-Rule" id="MF_01590"/>
    </source>
</evidence>
<name>CMOB_HELPY</name>
<accession>O25173</accession>
<reference key="1">
    <citation type="journal article" date="1997" name="Nature">
        <title>The complete genome sequence of the gastric pathogen Helicobacter pylori.</title>
        <authorList>
            <person name="Tomb J.-F."/>
            <person name="White O."/>
            <person name="Kerlavage A.R."/>
            <person name="Clayton R.A."/>
            <person name="Sutton G.G."/>
            <person name="Fleischmann R.D."/>
            <person name="Ketchum K.A."/>
            <person name="Klenk H.-P."/>
            <person name="Gill S.R."/>
            <person name="Dougherty B.A."/>
            <person name="Nelson K.E."/>
            <person name="Quackenbush J."/>
            <person name="Zhou L."/>
            <person name="Kirkness E.F."/>
            <person name="Peterson S.N."/>
            <person name="Loftus B.J."/>
            <person name="Richardson D.L."/>
            <person name="Dodson R.J."/>
            <person name="Khalak H.G."/>
            <person name="Glodek A."/>
            <person name="McKenney K."/>
            <person name="FitzGerald L.M."/>
            <person name="Lee N."/>
            <person name="Adams M.D."/>
            <person name="Hickey E.K."/>
            <person name="Berg D.E."/>
            <person name="Gocayne J.D."/>
            <person name="Utterback T.R."/>
            <person name="Peterson J.D."/>
            <person name="Kelley J.M."/>
            <person name="Cotton M.D."/>
            <person name="Weidman J.F."/>
            <person name="Fujii C."/>
            <person name="Bowman C."/>
            <person name="Watthey L."/>
            <person name="Wallin E."/>
            <person name="Hayes W.S."/>
            <person name="Borodovsky M."/>
            <person name="Karp P.D."/>
            <person name="Smith H.O."/>
            <person name="Fraser C.M."/>
            <person name="Venter J.C."/>
        </authorList>
    </citation>
    <scope>NUCLEOTIDE SEQUENCE [LARGE SCALE GENOMIC DNA]</scope>
    <source>
        <strain>ATCC 700392 / 26695</strain>
    </source>
</reference>